<comment type="function">
    <text evidence="1">Involved in the degradation of chitin. ChbG is essential for growth on the acetylated chitooligosaccharides chitobiose and chitotriose but is dispensable for growth on cellobiose and chitosan dimer, the deacetylated form of chitobiose. Deacetylation of chitobiose-6-P and chitotriose-6-P is necessary for both the activation of the chb promoter by the regulatory protein ChbR and the hydrolysis of phosphorylated beta-glucosides by the phospho-beta-glucosidase ChbF. Catalyzes the removal of only one acetyl group from chitobiose-6-P to yield monoacetylchitobiose-6-P, the inducer of ChbR and the substrate of ChbF.</text>
</comment>
<comment type="catalytic activity">
    <reaction evidence="1">
        <text>N,N'-diacetylchitobiose + H2O = N-acetyl-beta-D-glucosaminyl-(1-&gt;4)-D-glucosamine + acetate</text>
        <dbReference type="Rhea" id="RHEA:27469"/>
        <dbReference type="ChEBI" id="CHEBI:15377"/>
        <dbReference type="ChEBI" id="CHEBI:28681"/>
        <dbReference type="ChEBI" id="CHEBI:30089"/>
        <dbReference type="ChEBI" id="CHEBI:59910"/>
        <dbReference type="EC" id="3.5.1.105"/>
    </reaction>
</comment>
<comment type="catalytic activity">
    <reaction evidence="1">
        <text>diacetylchitobiose-6'-phosphate + H2O = N'-monoacetylchitobiose-6'-phosphate + acetate</text>
        <dbReference type="Rhea" id="RHEA:35083"/>
        <dbReference type="ChEBI" id="CHEBI:15377"/>
        <dbReference type="ChEBI" id="CHEBI:30089"/>
        <dbReference type="ChEBI" id="CHEBI:64883"/>
        <dbReference type="ChEBI" id="CHEBI:71315"/>
    </reaction>
</comment>
<comment type="cofactor">
    <cofactor evidence="1">
        <name>Mg(2+)</name>
        <dbReference type="ChEBI" id="CHEBI:18420"/>
    </cofactor>
</comment>
<comment type="pathway">
    <text evidence="1">Glycan degradation; chitin degradation.</text>
</comment>
<comment type="subunit">
    <text evidence="1">Homodimer.</text>
</comment>
<comment type="subcellular location">
    <subcellularLocation>
        <location evidence="1">Cytoplasm</location>
    </subcellularLocation>
</comment>
<comment type="similarity">
    <text evidence="1">Belongs to the YdjC deacetylase family. ChbG subfamily.</text>
</comment>
<sequence length="252" mass="28014">MERLLIVNADDFGLSKGQNYGIIEACRNGIVTSTTALVNGQAIDHAVQLSRDEPSLAIGMHFVLTMGKPLTAMPGLTRDGVLGKWIWQLAEEDALPLEEITQELASQYLRFIELFGRKPTHLDSHHHVHMFPQIFPIVARFAAEEGIALRIDRQPLSNAGDLPANLRSSQGFSSAFYGEEISEALFLQVLDDASHRGDRSLEVMCHPAFIDNTIRQSAYCFPRLTELEVLTSASLKYAIAERGYRLGSYLNV</sequence>
<protein>
    <recommendedName>
        <fullName evidence="1">Chitooligosaccharide deacetylase</fullName>
        <shortName evidence="1">COD</shortName>
        <ecNumber evidence="1">3.5.1.105</ecNumber>
    </recommendedName>
    <alternativeName>
        <fullName evidence="1">Chitin disaccharide deacetylase</fullName>
    </alternativeName>
    <alternativeName>
        <fullName evidence="1">Chitobiose deacetylase</fullName>
    </alternativeName>
    <alternativeName>
        <fullName evidence="1">Chitobiose-6P deacetylase</fullName>
    </alternativeName>
    <alternativeName>
        <fullName evidence="1">Chitotriose deacetylase</fullName>
    </alternativeName>
    <alternativeName>
        <fullName evidence="1">Chitotriose-6P deacetylase</fullName>
    </alternativeName>
</protein>
<feature type="chain" id="PRO_1000067078" description="Chitooligosaccharide deacetylase">
    <location>
        <begin position="1"/>
        <end position="252"/>
    </location>
</feature>
<feature type="binding site" evidence="1">
    <location>
        <position position="61"/>
    </location>
    <ligand>
        <name>Mg(2+)</name>
        <dbReference type="ChEBI" id="CHEBI:18420"/>
    </ligand>
</feature>
<feature type="binding site" evidence="1">
    <location>
        <position position="125"/>
    </location>
    <ligand>
        <name>Mg(2+)</name>
        <dbReference type="ChEBI" id="CHEBI:18420"/>
    </ligand>
</feature>
<evidence type="ECO:0000255" key="1">
    <source>
        <dbReference type="HAMAP-Rule" id="MF_01246"/>
    </source>
</evidence>
<dbReference type="EC" id="3.5.1.105" evidence="1"/>
<dbReference type="EMBL" id="CP000800">
    <property type="protein sequence ID" value="ABV18368.1"/>
    <property type="molecule type" value="Genomic_DNA"/>
</dbReference>
<dbReference type="RefSeq" id="WP_000440445.1">
    <property type="nucleotide sequence ID" value="NC_009801.1"/>
</dbReference>
<dbReference type="SMR" id="A7ZMK0"/>
<dbReference type="GeneID" id="75203039"/>
<dbReference type="KEGG" id="ecw:EcE24377A_1954"/>
<dbReference type="HOGENOM" id="CLU_064244_4_1_6"/>
<dbReference type="UniPathway" id="UPA00349"/>
<dbReference type="Proteomes" id="UP000001122">
    <property type="component" value="Chromosome"/>
</dbReference>
<dbReference type="GO" id="GO:0005737">
    <property type="term" value="C:cytoplasm"/>
    <property type="evidence" value="ECO:0007669"/>
    <property type="project" value="UniProtKB-SubCell"/>
</dbReference>
<dbReference type="GO" id="GO:0036311">
    <property type="term" value="F:chitin disaccharide deacetylase activity"/>
    <property type="evidence" value="ECO:0007669"/>
    <property type="project" value="UniProtKB-UniRule"/>
</dbReference>
<dbReference type="GO" id="GO:0019213">
    <property type="term" value="F:deacetylase activity"/>
    <property type="evidence" value="ECO:0007669"/>
    <property type="project" value="TreeGrafter"/>
</dbReference>
<dbReference type="GO" id="GO:0046872">
    <property type="term" value="F:metal ion binding"/>
    <property type="evidence" value="ECO:0007669"/>
    <property type="project" value="UniProtKB-KW"/>
</dbReference>
<dbReference type="GO" id="GO:0006032">
    <property type="term" value="P:chitin catabolic process"/>
    <property type="evidence" value="ECO:0007669"/>
    <property type="project" value="UniProtKB-UniPathway"/>
</dbReference>
<dbReference type="GO" id="GO:0052777">
    <property type="term" value="P:diacetylchitobiose catabolic process"/>
    <property type="evidence" value="ECO:0007669"/>
    <property type="project" value="UniProtKB-UniRule"/>
</dbReference>
<dbReference type="GO" id="GO:0000272">
    <property type="term" value="P:polysaccharide catabolic process"/>
    <property type="evidence" value="ECO:0007669"/>
    <property type="project" value="UniProtKB-UniRule"/>
</dbReference>
<dbReference type="CDD" id="cd10803">
    <property type="entry name" value="YdjC_EF3048_like"/>
    <property type="match status" value="1"/>
</dbReference>
<dbReference type="FunFam" id="3.20.20.370:FF:000001">
    <property type="entry name" value="Chitooligosaccharide deacetylase"/>
    <property type="match status" value="1"/>
</dbReference>
<dbReference type="Gene3D" id="3.20.20.370">
    <property type="entry name" value="Glycoside hydrolase/deacetylase"/>
    <property type="match status" value="1"/>
</dbReference>
<dbReference type="HAMAP" id="MF_01246">
    <property type="entry name" value="COD"/>
    <property type="match status" value="1"/>
</dbReference>
<dbReference type="InterPro" id="IPR022948">
    <property type="entry name" value="COD_ChbG_bac"/>
</dbReference>
<dbReference type="InterPro" id="IPR011330">
    <property type="entry name" value="Glyco_hydro/deAcase_b/a-brl"/>
</dbReference>
<dbReference type="InterPro" id="IPR006879">
    <property type="entry name" value="YdjC-like"/>
</dbReference>
<dbReference type="NCBIfam" id="NF002559">
    <property type="entry name" value="PRK02134.1"/>
    <property type="match status" value="1"/>
</dbReference>
<dbReference type="PANTHER" id="PTHR31609:SF1">
    <property type="entry name" value="CARBOHYDRATE DEACETYLASE"/>
    <property type="match status" value="1"/>
</dbReference>
<dbReference type="PANTHER" id="PTHR31609">
    <property type="entry name" value="YDJC DEACETYLASE FAMILY MEMBER"/>
    <property type="match status" value="1"/>
</dbReference>
<dbReference type="Pfam" id="PF04794">
    <property type="entry name" value="YdjC"/>
    <property type="match status" value="1"/>
</dbReference>
<dbReference type="SUPFAM" id="SSF88713">
    <property type="entry name" value="Glycoside hydrolase/deacetylase"/>
    <property type="match status" value="1"/>
</dbReference>
<organism>
    <name type="scientific">Escherichia coli O139:H28 (strain E24377A / ETEC)</name>
    <dbReference type="NCBI Taxonomy" id="331111"/>
    <lineage>
        <taxon>Bacteria</taxon>
        <taxon>Pseudomonadati</taxon>
        <taxon>Pseudomonadota</taxon>
        <taxon>Gammaproteobacteria</taxon>
        <taxon>Enterobacterales</taxon>
        <taxon>Enterobacteriaceae</taxon>
        <taxon>Escherichia</taxon>
    </lineage>
</organism>
<accession>A7ZMK0</accession>
<name>CHBG_ECO24</name>
<keyword id="KW-0119">Carbohydrate metabolism</keyword>
<keyword id="KW-0146">Chitin degradation</keyword>
<keyword id="KW-0963">Cytoplasm</keyword>
<keyword id="KW-0378">Hydrolase</keyword>
<keyword id="KW-0460">Magnesium</keyword>
<keyword id="KW-0479">Metal-binding</keyword>
<keyword id="KW-0624">Polysaccharide degradation</keyword>
<keyword id="KW-1185">Reference proteome</keyword>
<proteinExistence type="inferred from homology"/>
<reference key="1">
    <citation type="journal article" date="2008" name="J. Bacteriol.">
        <title>The pangenome structure of Escherichia coli: comparative genomic analysis of E. coli commensal and pathogenic isolates.</title>
        <authorList>
            <person name="Rasko D.A."/>
            <person name="Rosovitz M.J."/>
            <person name="Myers G.S.A."/>
            <person name="Mongodin E.F."/>
            <person name="Fricke W.F."/>
            <person name="Gajer P."/>
            <person name="Crabtree J."/>
            <person name="Sebaihia M."/>
            <person name="Thomson N.R."/>
            <person name="Chaudhuri R."/>
            <person name="Henderson I.R."/>
            <person name="Sperandio V."/>
            <person name="Ravel J."/>
        </authorList>
    </citation>
    <scope>NUCLEOTIDE SEQUENCE [LARGE SCALE GENOMIC DNA]</scope>
    <source>
        <strain>E24377A / ETEC</strain>
    </source>
</reference>
<gene>
    <name evidence="1" type="primary">chbG</name>
    <name type="ordered locus">EcE24377A_1954</name>
</gene>